<proteinExistence type="inferred from homology"/>
<feature type="chain" id="PRO_0000339403" description="Dihydromonapterin reductase">
    <location>
        <begin position="1"/>
        <end position="240"/>
    </location>
</feature>
<feature type="active site" description="Proton acceptor" evidence="2">
    <location>
        <position position="152"/>
    </location>
</feature>
<dbReference type="EC" id="1.5.1.50" evidence="1"/>
<dbReference type="EC" id="1.5.1.3" evidence="1"/>
<dbReference type="EMBL" id="CP000038">
    <property type="protein sequence ID" value="AAZ88253.1"/>
    <property type="molecule type" value="Genomic_DNA"/>
</dbReference>
<dbReference type="RefSeq" id="WP_000513663.1">
    <property type="nucleotide sequence ID" value="NC_007384.1"/>
</dbReference>
<dbReference type="SMR" id="Q3Z1V9"/>
<dbReference type="GeneID" id="93775754"/>
<dbReference type="KEGG" id="ssn:SSON_1554"/>
<dbReference type="HOGENOM" id="CLU_010194_1_3_6"/>
<dbReference type="Proteomes" id="UP000002529">
    <property type="component" value="Chromosome"/>
</dbReference>
<dbReference type="GO" id="GO:0004146">
    <property type="term" value="F:dihydrofolate reductase activity"/>
    <property type="evidence" value="ECO:0007669"/>
    <property type="project" value="UniProtKB-EC"/>
</dbReference>
<dbReference type="GO" id="GO:0006730">
    <property type="term" value="P:one-carbon metabolic process"/>
    <property type="evidence" value="ECO:0007669"/>
    <property type="project" value="UniProtKB-KW"/>
</dbReference>
<dbReference type="CDD" id="cd05357">
    <property type="entry name" value="PR_SDR_c"/>
    <property type="match status" value="1"/>
</dbReference>
<dbReference type="FunFam" id="3.40.50.720:FF:000225">
    <property type="entry name" value="Dihydrofolate reductase FolM"/>
    <property type="match status" value="1"/>
</dbReference>
<dbReference type="Gene3D" id="3.40.50.720">
    <property type="entry name" value="NAD(P)-binding Rossmann-like Domain"/>
    <property type="match status" value="1"/>
</dbReference>
<dbReference type="InterPro" id="IPR036291">
    <property type="entry name" value="NAD(P)-bd_dom_sf"/>
</dbReference>
<dbReference type="InterPro" id="IPR020904">
    <property type="entry name" value="Sc_DH/Rdtase_CS"/>
</dbReference>
<dbReference type="InterPro" id="IPR002347">
    <property type="entry name" value="SDR_fam"/>
</dbReference>
<dbReference type="NCBIfam" id="NF005066">
    <property type="entry name" value="PRK06483.1"/>
    <property type="match status" value="1"/>
</dbReference>
<dbReference type="PANTHER" id="PTHR43639:SF6">
    <property type="entry name" value="DIHYDROMONAPTERIN REDUCTASE"/>
    <property type="match status" value="1"/>
</dbReference>
<dbReference type="PANTHER" id="PTHR43639">
    <property type="entry name" value="OXIDOREDUCTASE, SHORT-CHAIN DEHYDROGENASE/REDUCTASE FAMILY (AFU_ORTHOLOGUE AFUA_5G02870)"/>
    <property type="match status" value="1"/>
</dbReference>
<dbReference type="Pfam" id="PF13561">
    <property type="entry name" value="adh_short_C2"/>
    <property type="match status" value="1"/>
</dbReference>
<dbReference type="PRINTS" id="PR00081">
    <property type="entry name" value="GDHRDH"/>
</dbReference>
<dbReference type="SUPFAM" id="SSF51735">
    <property type="entry name" value="NAD(P)-binding Rossmann-fold domains"/>
    <property type="match status" value="1"/>
</dbReference>
<dbReference type="PROSITE" id="PS00061">
    <property type="entry name" value="ADH_SHORT"/>
    <property type="match status" value="1"/>
</dbReference>
<keyword id="KW-0521">NADP</keyword>
<keyword id="KW-0554">One-carbon metabolism</keyword>
<keyword id="KW-0560">Oxidoreductase</keyword>
<keyword id="KW-1185">Reference proteome</keyword>
<accession>Q3Z1V9</accession>
<organism>
    <name type="scientific">Shigella sonnei (strain Ss046)</name>
    <dbReference type="NCBI Taxonomy" id="300269"/>
    <lineage>
        <taxon>Bacteria</taxon>
        <taxon>Pseudomonadati</taxon>
        <taxon>Pseudomonadota</taxon>
        <taxon>Gammaproteobacteria</taxon>
        <taxon>Enterobacterales</taxon>
        <taxon>Enterobacteriaceae</taxon>
        <taxon>Shigella</taxon>
    </lineage>
</organism>
<name>FOLM_SHISS</name>
<gene>
    <name type="primary">folM</name>
    <name type="ordered locus">SSON_1554</name>
</gene>
<evidence type="ECO:0000250" key="1">
    <source>
        <dbReference type="UniProtKB" id="P0AFS3"/>
    </source>
</evidence>
<evidence type="ECO:0000255" key="2">
    <source>
        <dbReference type="PROSITE-ProRule" id="PRU10001"/>
    </source>
</evidence>
<evidence type="ECO:0000305" key="3"/>
<sequence>MGKAQPLPILITGGGRRIGLALAWHFINQKQPVIVSYRTHYPAIDGLIKAGAQCIQADFSTNDGVMAFADEVLKSPHGLRAILHNASAWMAEKPGAPLADVLACMMQIHVNTPYLLNHALERLLRGHGHAASDIIHFTDYVVERGSDKHIAYAASKAALDNMTRSFARKLAPEVKVNSIAPSLILFNEHDDAEYRQQALNKSLMKTAPGEKEVIDLVDYLLTSCFVTGRSFPLDGGRHLR</sequence>
<reference key="1">
    <citation type="journal article" date="2005" name="Nucleic Acids Res.">
        <title>Genome dynamics and diversity of Shigella species, the etiologic agents of bacillary dysentery.</title>
        <authorList>
            <person name="Yang F."/>
            <person name="Yang J."/>
            <person name="Zhang X."/>
            <person name="Chen L."/>
            <person name="Jiang Y."/>
            <person name="Yan Y."/>
            <person name="Tang X."/>
            <person name="Wang J."/>
            <person name="Xiong Z."/>
            <person name="Dong J."/>
            <person name="Xue Y."/>
            <person name="Zhu Y."/>
            <person name="Xu X."/>
            <person name="Sun L."/>
            <person name="Chen S."/>
            <person name="Nie H."/>
            <person name="Peng J."/>
            <person name="Xu J."/>
            <person name="Wang Y."/>
            <person name="Yuan Z."/>
            <person name="Wen Y."/>
            <person name="Yao Z."/>
            <person name="Shen Y."/>
            <person name="Qiang B."/>
            <person name="Hou Y."/>
            <person name="Yu J."/>
            <person name="Jin Q."/>
        </authorList>
    </citation>
    <scope>NUCLEOTIDE SEQUENCE [LARGE SCALE GENOMIC DNA]</scope>
    <source>
        <strain>Ss046</strain>
    </source>
</reference>
<comment type="function">
    <text evidence="1">Catalyzes the reduction of dihydromonapterin to tetrahydromonapterin. Also has lower activity with dihydrofolate.</text>
</comment>
<comment type="catalytic activity">
    <reaction evidence="1">
        <text>(6S)-5,6,7,8-tetrahydrofolate + NADP(+) = 7,8-dihydrofolate + NADPH + H(+)</text>
        <dbReference type="Rhea" id="RHEA:15009"/>
        <dbReference type="ChEBI" id="CHEBI:15378"/>
        <dbReference type="ChEBI" id="CHEBI:57451"/>
        <dbReference type="ChEBI" id="CHEBI:57453"/>
        <dbReference type="ChEBI" id="CHEBI:57783"/>
        <dbReference type="ChEBI" id="CHEBI:58349"/>
        <dbReference type="EC" id="1.5.1.3"/>
    </reaction>
</comment>
<comment type="catalytic activity">
    <reaction evidence="1">
        <text>7,8-dihydromonapterin + NADPH + H(+) = 5,6,7,8-tetrahydromonapterin + NADP(+)</text>
        <dbReference type="Rhea" id="RHEA:34847"/>
        <dbReference type="ChEBI" id="CHEBI:15378"/>
        <dbReference type="ChEBI" id="CHEBI:57783"/>
        <dbReference type="ChEBI" id="CHEBI:58349"/>
        <dbReference type="ChEBI" id="CHEBI:71175"/>
        <dbReference type="ChEBI" id="CHEBI:71177"/>
        <dbReference type="EC" id="1.5.1.50"/>
    </reaction>
</comment>
<comment type="similarity">
    <text evidence="3">Belongs to the short-chain dehydrogenases/reductases (SDR) family. FolM subfamily.</text>
</comment>
<protein>
    <recommendedName>
        <fullName>Dihydromonapterin reductase</fullName>
        <shortName>H(2)-MPt reductase</shortName>
        <ecNumber evidence="1">1.5.1.50</ecNumber>
    </recommendedName>
    <alternativeName>
        <fullName>Dihydrofolate reductase</fullName>
        <shortName>DHFR</shortName>
        <ecNumber evidence="1">1.5.1.3</ecNumber>
    </alternativeName>
</protein>